<evidence type="ECO:0000250" key="1">
    <source>
        <dbReference type="UniProtKB" id="P05197"/>
    </source>
</evidence>
<evidence type="ECO:0000250" key="2">
    <source>
        <dbReference type="UniProtKB" id="P13639"/>
    </source>
</evidence>
<evidence type="ECO:0000250" key="3">
    <source>
        <dbReference type="UniProtKB" id="P32324"/>
    </source>
</evidence>
<evidence type="ECO:0000250" key="4">
    <source>
        <dbReference type="UniProtKB" id="Q90705"/>
    </source>
</evidence>
<evidence type="ECO:0000255" key="5">
    <source>
        <dbReference type="PROSITE-ProRule" id="PRU01059"/>
    </source>
</evidence>
<evidence type="ECO:0000269" key="6">
    <source>
    </source>
</evidence>
<evidence type="ECO:0000303" key="7">
    <source ref="3"/>
</evidence>
<evidence type="ECO:0000312" key="8">
    <source>
        <dbReference type="ZFIN" id="ZDB-GENE-030131-5128"/>
    </source>
</evidence>
<evidence type="ECO:0007744" key="9">
    <source>
        <dbReference type="PDB" id="7OYA"/>
    </source>
</evidence>
<proteinExistence type="evidence at protein level"/>
<gene>
    <name evidence="8" type="primary">eef2b</name>
    <name evidence="7" type="ORF">zgc:63584</name>
</gene>
<protein>
    <recommendedName>
        <fullName>Elongation factor 2b</fullName>
        <shortName>EF-2</shortName>
        <ecNumber evidence="2">3.6.5.-</ecNumber>
    </recommendedName>
</protein>
<dbReference type="EC" id="3.6.5.-" evidence="2"/>
<dbReference type="EMBL" id="AY391422">
    <property type="protein sequence ID" value="AAQ91234.1"/>
    <property type="molecule type" value="mRNA"/>
</dbReference>
<dbReference type="EMBL" id="CU651576">
    <property type="status" value="NOT_ANNOTATED_CDS"/>
    <property type="molecule type" value="Genomic_DNA"/>
</dbReference>
<dbReference type="EMBL" id="BC063965">
    <property type="protein sequence ID" value="AAH63965.1"/>
    <property type="molecule type" value="mRNA"/>
</dbReference>
<dbReference type="RefSeq" id="NP_956752.2">
    <property type="nucleotide sequence ID" value="NM_200458.2"/>
</dbReference>
<dbReference type="PDB" id="7OYA">
    <property type="method" value="EM"/>
    <property type="resolution" value="3.20 A"/>
    <property type="chains" value="v2=1-858"/>
</dbReference>
<dbReference type="PDBsum" id="7OYA"/>
<dbReference type="EMDB" id="EMD-13111"/>
<dbReference type="SMR" id="Q6P3J5"/>
<dbReference type="IntAct" id="Q6P3J5">
    <property type="interactions" value="1"/>
</dbReference>
<dbReference type="MINT" id="Q6P3J5"/>
<dbReference type="STRING" id="7955.ENSDARP00000131100"/>
<dbReference type="PaxDb" id="7955-ENSDARP00000024752"/>
<dbReference type="Ensembl" id="ENSDART00000168497">
    <property type="protein sequence ID" value="ENSDARP00000131100"/>
    <property type="gene ID" value="ENSDARG00000100371"/>
</dbReference>
<dbReference type="GeneID" id="326929"/>
<dbReference type="KEGG" id="dre:326929"/>
<dbReference type="AGR" id="ZFIN:ZDB-GENE-030131-5128"/>
<dbReference type="CTD" id="326929"/>
<dbReference type="ZFIN" id="ZDB-GENE-030131-5128">
    <property type="gene designation" value="eef2b"/>
</dbReference>
<dbReference type="eggNOG" id="KOG0469">
    <property type="taxonomic scope" value="Eukaryota"/>
</dbReference>
<dbReference type="HOGENOM" id="CLU_002794_11_2_1"/>
<dbReference type="OMA" id="ASWNTEN"/>
<dbReference type="OrthoDB" id="364892at2759"/>
<dbReference type="TreeFam" id="TF300575"/>
<dbReference type="Reactome" id="R-DRE-156902">
    <property type="pathway name" value="Peptide chain elongation"/>
</dbReference>
<dbReference type="Reactome" id="R-DRE-5358493">
    <property type="pathway name" value="Synthesis of diphthamide-EEF2"/>
</dbReference>
<dbReference type="Reactome" id="R-DRE-6798695">
    <property type="pathway name" value="Neutrophil degranulation"/>
</dbReference>
<dbReference type="Reactome" id="R-DRE-8876725">
    <property type="pathway name" value="Protein methylation"/>
</dbReference>
<dbReference type="PRO" id="PR:Q6P3J5"/>
<dbReference type="Proteomes" id="UP000000437">
    <property type="component" value="Chromosome 2"/>
</dbReference>
<dbReference type="Bgee" id="ENSDARG00000100371">
    <property type="expression patterns" value="Expressed in presomitic mesoderm and 28 other cell types or tissues"/>
</dbReference>
<dbReference type="GO" id="GO:0005829">
    <property type="term" value="C:cytosol"/>
    <property type="evidence" value="ECO:0000318"/>
    <property type="project" value="GO_Central"/>
</dbReference>
<dbReference type="GO" id="GO:0005634">
    <property type="term" value="C:nucleus"/>
    <property type="evidence" value="ECO:0007669"/>
    <property type="project" value="UniProtKB-SubCell"/>
</dbReference>
<dbReference type="GO" id="GO:1990904">
    <property type="term" value="C:ribonucleoprotein complex"/>
    <property type="evidence" value="ECO:0000318"/>
    <property type="project" value="GO_Central"/>
</dbReference>
<dbReference type="GO" id="GO:0005525">
    <property type="term" value="F:GTP binding"/>
    <property type="evidence" value="ECO:0007669"/>
    <property type="project" value="UniProtKB-KW"/>
</dbReference>
<dbReference type="GO" id="GO:0003924">
    <property type="term" value="F:GTPase activity"/>
    <property type="evidence" value="ECO:0000318"/>
    <property type="project" value="GO_Central"/>
</dbReference>
<dbReference type="GO" id="GO:0043022">
    <property type="term" value="F:ribosome binding"/>
    <property type="evidence" value="ECO:0000318"/>
    <property type="project" value="GO_Central"/>
</dbReference>
<dbReference type="GO" id="GO:0003746">
    <property type="term" value="F:translation elongation factor activity"/>
    <property type="evidence" value="ECO:0000318"/>
    <property type="project" value="GO_Central"/>
</dbReference>
<dbReference type="GO" id="GO:0071466">
    <property type="term" value="P:cellular response to xenobiotic stimulus"/>
    <property type="evidence" value="ECO:0000314"/>
    <property type="project" value="ZFIN"/>
</dbReference>
<dbReference type="GO" id="GO:0043009">
    <property type="term" value="P:chordate embryonic development"/>
    <property type="evidence" value="ECO:0000315"/>
    <property type="project" value="ZFIN"/>
</dbReference>
<dbReference type="GO" id="GO:0006414">
    <property type="term" value="P:translational elongation"/>
    <property type="evidence" value="ECO:0000318"/>
    <property type="project" value="GO_Central"/>
</dbReference>
<dbReference type="CDD" id="cd01681">
    <property type="entry name" value="aeEF2_snRNP_like_IV"/>
    <property type="match status" value="1"/>
</dbReference>
<dbReference type="CDD" id="cd04096">
    <property type="entry name" value="eEF2_snRNP_like_C"/>
    <property type="match status" value="1"/>
</dbReference>
<dbReference type="CDD" id="cd01885">
    <property type="entry name" value="EF2"/>
    <property type="match status" value="1"/>
</dbReference>
<dbReference type="CDD" id="cd16261">
    <property type="entry name" value="EF2_snRNP_III"/>
    <property type="match status" value="1"/>
</dbReference>
<dbReference type="CDD" id="cd03700">
    <property type="entry name" value="EF2_snRNP_like_II"/>
    <property type="match status" value="1"/>
</dbReference>
<dbReference type="FunFam" id="2.40.30.10:FF:000010">
    <property type="entry name" value="Translation elongation factor 2"/>
    <property type="match status" value="1"/>
</dbReference>
<dbReference type="FunFam" id="3.30.230.10:FF:000006">
    <property type="entry name" value="Translation elongation factor 2"/>
    <property type="match status" value="1"/>
</dbReference>
<dbReference type="FunFam" id="3.30.70.240:FF:000003">
    <property type="entry name" value="Translation elongation factor 2"/>
    <property type="match status" value="1"/>
</dbReference>
<dbReference type="FunFam" id="3.30.70.870:FF:000002">
    <property type="entry name" value="Translation elongation factor 2"/>
    <property type="match status" value="1"/>
</dbReference>
<dbReference type="FunFam" id="3.40.50.300:FF:000058">
    <property type="entry name" value="Translation elongation factor 2"/>
    <property type="match status" value="1"/>
</dbReference>
<dbReference type="Gene3D" id="3.30.230.10">
    <property type="match status" value="1"/>
</dbReference>
<dbReference type="Gene3D" id="3.30.70.240">
    <property type="match status" value="1"/>
</dbReference>
<dbReference type="Gene3D" id="3.30.70.870">
    <property type="entry name" value="Elongation Factor G (Translational Gtpase), domain 3"/>
    <property type="match status" value="1"/>
</dbReference>
<dbReference type="Gene3D" id="3.40.50.300">
    <property type="entry name" value="P-loop containing nucleotide triphosphate hydrolases"/>
    <property type="match status" value="1"/>
</dbReference>
<dbReference type="Gene3D" id="2.40.30.10">
    <property type="entry name" value="Translation factors"/>
    <property type="match status" value="1"/>
</dbReference>
<dbReference type="InterPro" id="IPR041095">
    <property type="entry name" value="EFG_II"/>
</dbReference>
<dbReference type="InterPro" id="IPR035647">
    <property type="entry name" value="EFG_III/V"/>
</dbReference>
<dbReference type="InterPro" id="IPR000640">
    <property type="entry name" value="EFG_V-like"/>
</dbReference>
<dbReference type="InterPro" id="IPR004161">
    <property type="entry name" value="EFTu-like_2"/>
</dbReference>
<dbReference type="InterPro" id="IPR031157">
    <property type="entry name" value="G_TR_CS"/>
</dbReference>
<dbReference type="InterPro" id="IPR027417">
    <property type="entry name" value="P-loop_NTPase"/>
</dbReference>
<dbReference type="InterPro" id="IPR020568">
    <property type="entry name" value="Ribosomal_Su5_D2-typ_SF"/>
</dbReference>
<dbReference type="InterPro" id="IPR014721">
    <property type="entry name" value="Ribsml_uS5_D2-typ_fold_subgr"/>
</dbReference>
<dbReference type="InterPro" id="IPR005225">
    <property type="entry name" value="Small_GTP-bd"/>
</dbReference>
<dbReference type="InterPro" id="IPR000795">
    <property type="entry name" value="T_Tr_GTP-bd_dom"/>
</dbReference>
<dbReference type="InterPro" id="IPR009000">
    <property type="entry name" value="Transl_B-barrel_sf"/>
</dbReference>
<dbReference type="InterPro" id="IPR005517">
    <property type="entry name" value="Transl_elong_EFG/EF2_IV"/>
</dbReference>
<dbReference type="NCBIfam" id="TIGR00231">
    <property type="entry name" value="small_GTP"/>
    <property type="match status" value="1"/>
</dbReference>
<dbReference type="PANTHER" id="PTHR42908:SF29">
    <property type="entry name" value="ELONGATION FACTOR 2B-RELATED"/>
    <property type="match status" value="1"/>
</dbReference>
<dbReference type="PANTHER" id="PTHR42908">
    <property type="entry name" value="TRANSLATION ELONGATION FACTOR-RELATED"/>
    <property type="match status" value="1"/>
</dbReference>
<dbReference type="Pfam" id="PF00679">
    <property type="entry name" value="EFG_C"/>
    <property type="match status" value="1"/>
</dbReference>
<dbReference type="Pfam" id="PF14492">
    <property type="entry name" value="EFG_III"/>
    <property type="match status" value="1"/>
</dbReference>
<dbReference type="Pfam" id="PF03764">
    <property type="entry name" value="EFG_IV"/>
    <property type="match status" value="1"/>
</dbReference>
<dbReference type="Pfam" id="PF00009">
    <property type="entry name" value="GTP_EFTU"/>
    <property type="match status" value="1"/>
</dbReference>
<dbReference type="Pfam" id="PF03144">
    <property type="entry name" value="GTP_EFTU_D2"/>
    <property type="match status" value="1"/>
</dbReference>
<dbReference type="PRINTS" id="PR00315">
    <property type="entry name" value="ELONGATNFCT"/>
</dbReference>
<dbReference type="SMART" id="SM00838">
    <property type="entry name" value="EFG_C"/>
    <property type="match status" value="1"/>
</dbReference>
<dbReference type="SMART" id="SM00889">
    <property type="entry name" value="EFG_IV"/>
    <property type="match status" value="1"/>
</dbReference>
<dbReference type="SUPFAM" id="SSF54980">
    <property type="entry name" value="EF-G C-terminal domain-like"/>
    <property type="match status" value="2"/>
</dbReference>
<dbReference type="SUPFAM" id="SSF52540">
    <property type="entry name" value="P-loop containing nucleoside triphosphate hydrolases"/>
    <property type="match status" value="1"/>
</dbReference>
<dbReference type="SUPFAM" id="SSF54211">
    <property type="entry name" value="Ribosomal protein S5 domain 2-like"/>
    <property type="match status" value="1"/>
</dbReference>
<dbReference type="SUPFAM" id="SSF50447">
    <property type="entry name" value="Translation proteins"/>
    <property type="match status" value="1"/>
</dbReference>
<dbReference type="PROSITE" id="PS00301">
    <property type="entry name" value="G_TR_1"/>
    <property type="match status" value="1"/>
</dbReference>
<dbReference type="PROSITE" id="PS51722">
    <property type="entry name" value="G_TR_2"/>
    <property type="match status" value="1"/>
</dbReference>
<keyword id="KW-0002">3D-structure</keyword>
<keyword id="KW-0963">Cytoplasm</keyword>
<keyword id="KW-0251">Elongation factor</keyword>
<keyword id="KW-0342">GTP-binding</keyword>
<keyword id="KW-0378">Hydrolase</keyword>
<keyword id="KW-0547">Nucleotide-binding</keyword>
<keyword id="KW-0539">Nucleus</keyword>
<keyword id="KW-0648">Protein biosynthesis</keyword>
<keyword id="KW-1185">Reference proteome</keyword>
<organism>
    <name type="scientific">Danio rerio</name>
    <name type="common">Zebrafish</name>
    <name type="synonym">Brachydanio rerio</name>
    <dbReference type="NCBI Taxonomy" id="7955"/>
    <lineage>
        <taxon>Eukaryota</taxon>
        <taxon>Metazoa</taxon>
        <taxon>Chordata</taxon>
        <taxon>Craniata</taxon>
        <taxon>Vertebrata</taxon>
        <taxon>Euteleostomi</taxon>
        <taxon>Actinopterygii</taxon>
        <taxon>Neopterygii</taxon>
        <taxon>Teleostei</taxon>
        <taxon>Ostariophysi</taxon>
        <taxon>Cypriniformes</taxon>
        <taxon>Danionidae</taxon>
        <taxon>Danioninae</taxon>
        <taxon>Danio</taxon>
    </lineage>
</organism>
<sequence length="858" mass="95498">MVNFTVDQIRAIMDKKSNIRNMSVIAHVDHGKSTLTDSLVSKAGIIASARAGETRFTDTRKDEQERCITIKSTAISMYYELTENDLAFIKQCKDGSGFLINLIDSPGHVDFSSEVTAALRVTDGALVVVDCVSGVCVQTETVLRQAIAERIKPVLMMNKMDRALLELQLEPEELYQTFQRIVENVNVIISTYGEDEGGPMGNIMIDPVIGTVGFGSGLHGWAFTLKQFAEMYVAKFASKGEAQLSPADRCKKVEDMMKKLWGDRYFDPAGGKFTKTANGPDGKKYPRTFAQLILDPIFKVFDAIMNFKKEETAKLIEKLDIKLDTEDKDKEGKPLLKAVMRRWLPAGEALLQMITIHLPSPVTAQKYRCELLYEGPGDDEAAMGIKNCDPKGPLMMYISKMVPTTDKGRFYAFGRVFSGVVSTGLKVRIMGPNYTPGKKEDLYLKPIQRTILMMGRYVEPIEDVPCGNIVGLVGVDQFLVKTGTITTFDQAHNMRVMKFSVSPVVRVAVEAKNPADLPKLVEGLKRLAKSDPMVQCIIEESGEHIIAGAGELHLEICLKDLEEDHACIPLKKSDPVVSYRETVSAESDQMCLSKSPNKHNRLYMKARPFPDGLAEDIDKGDVSSRQELKTRARYLADKYEWEVTEARKIWCFGPDGTGPNMLVDVTKGVQYLNEIKDSVVAGFQWATKEGALCEENMRAVRFDIHDVTLHTDAIHRGGGQIIPTARRVLYACQLTAEPRLMEPIYLVEIQCPEQVVGGIYGVLNRKRGHVFEESQVMGTPMFVVKAYLPVNESFGFTADLRSNTGGQAFPQCVFDHWQILPGDPKDAASKPCQIVADTRKRKGLKEGIPALDNFLDKL</sequence>
<accession>Q6P3J5</accession>
<accession>A0A0R4IA71</accession>
<accession>Q6TNU5</accession>
<comment type="function">
    <text evidence="2">Catalyzes the GTP-dependent ribosomal translocation step during translation elongation (By similarity). During this step, the ribosome changes from the pre-translocational (PRE) to the post-translocational (POST) state as the newly formed A-site-bound peptidyl-tRNA and P-site-bound deacylated tRNA move to the P and E sites, respectively (By similarity). Catalyzes the coordinated movement of the two tRNA molecules, the mRNA and conformational changes in the ribosome (By similarity).</text>
</comment>
<comment type="catalytic activity">
    <reaction evidence="2">
        <text>GTP + H2O = GDP + phosphate + H(+)</text>
        <dbReference type="Rhea" id="RHEA:19669"/>
        <dbReference type="ChEBI" id="CHEBI:15377"/>
        <dbReference type="ChEBI" id="CHEBI:15378"/>
        <dbReference type="ChEBI" id="CHEBI:37565"/>
        <dbReference type="ChEBI" id="CHEBI:43474"/>
        <dbReference type="ChEBI" id="CHEBI:58189"/>
    </reaction>
    <physiologicalReaction direction="left-to-right" evidence="2">
        <dbReference type="Rhea" id="RHEA:19670"/>
    </physiologicalReaction>
</comment>
<comment type="subunit">
    <text evidence="2 6">Binds to 80S ribosomes (PubMed:36653451). Actively translating ribosomes show mutually exclusive binding of eIF5a (EIF5A or EIF5A2) and EEF2/eEF2 (By similarity). Interacts with serbp1; interaction sequesters eef2/eEF2 at the A-site of the ribosome, thereby blocking the interaction sites of the mRNA-tRNA complex, promoting ribosome stabilization and hibernation (By similarity). Interacts with habp4; interaction takes place at the A-site of hibernating ribosomes and promotes ribosome stabilization (PubMed:36653451).</text>
</comment>
<comment type="subcellular location">
    <subcellularLocation>
        <location evidence="2">Cytoplasm</location>
    </subcellularLocation>
    <subcellularLocation>
        <location evidence="2">Nucleus</location>
    </subcellularLocation>
</comment>
<comment type="similarity">
    <text evidence="5">Belongs to the TRAFAC class translation factor GTPase superfamily. Classic translation factor GTPase family. EF-G/EF-2 subfamily.</text>
</comment>
<feature type="initiator methionine" description="Removed" evidence="4">
    <location>
        <position position="1"/>
    </location>
</feature>
<feature type="chain" id="PRO_0000458237" description="Elongation factor 2b">
    <location>
        <begin position="2"/>
        <end position="858"/>
    </location>
</feature>
<feature type="domain" description="tr-type G" evidence="5">
    <location>
        <begin position="17"/>
        <end position="362"/>
    </location>
</feature>
<feature type="binding site" evidence="3">
    <location>
        <begin position="26"/>
        <end position="33"/>
    </location>
    <ligand>
        <name>GTP</name>
        <dbReference type="ChEBI" id="CHEBI:37565"/>
    </ligand>
</feature>
<feature type="binding site" evidence="3">
    <location>
        <begin position="158"/>
        <end position="161"/>
    </location>
    <ligand>
        <name>GTP</name>
        <dbReference type="ChEBI" id="CHEBI:37565"/>
    </ligand>
</feature>
<feature type="binding site" evidence="3">
    <location>
        <begin position="216"/>
        <end position="218"/>
    </location>
    <ligand>
        <name>GTP</name>
        <dbReference type="ChEBI" id="CHEBI:37565"/>
    </ligand>
</feature>
<feature type="modified residue" description="Diphthamide" evidence="1">
    <location>
        <position position="715"/>
    </location>
</feature>
<reference key="1">
    <citation type="journal article" date="2004" name="Proc. Natl. Acad. Sci. U.S.A.">
        <title>Hematopoietic gene expression profile in zebrafish kidney marrow.</title>
        <authorList>
            <person name="Song H.-D."/>
            <person name="Sun X.-J."/>
            <person name="Deng M."/>
            <person name="Zhang G.-W."/>
            <person name="Zhou Y."/>
            <person name="Wu X.-Y."/>
            <person name="Sheng Y."/>
            <person name="Chen Y."/>
            <person name="Ruan Z."/>
            <person name="Jiang C.-L."/>
            <person name="Fan H.-Y."/>
            <person name="Zon L.I."/>
            <person name="Kanki J.P."/>
            <person name="Liu T.X."/>
            <person name="Look A.T."/>
            <person name="Chen Z."/>
        </authorList>
    </citation>
    <scope>NUCLEOTIDE SEQUENCE [LARGE SCALE MRNA]</scope>
    <source>
        <tissue>Kidney marrow</tissue>
    </source>
</reference>
<reference key="2">
    <citation type="journal article" date="2013" name="Nature">
        <title>The zebrafish reference genome sequence and its relationship to the human genome.</title>
        <authorList>
            <person name="Howe K."/>
            <person name="Clark M.D."/>
            <person name="Torroja C.F."/>
            <person name="Torrance J."/>
            <person name="Berthelot C."/>
            <person name="Muffato M."/>
            <person name="Collins J.E."/>
            <person name="Humphray S."/>
            <person name="McLaren K."/>
            <person name="Matthews L."/>
            <person name="McLaren S."/>
            <person name="Sealy I."/>
            <person name="Caccamo M."/>
            <person name="Churcher C."/>
            <person name="Scott C."/>
            <person name="Barrett J.C."/>
            <person name="Koch R."/>
            <person name="Rauch G.J."/>
            <person name="White S."/>
            <person name="Chow W."/>
            <person name="Kilian B."/>
            <person name="Quintais L.T."/>
            <person name="Guerra-Assuncao J.A."/>
            <person name="Zhou Y."/>
            <person name="Gu Y."/>
            <person name="Yen J."/>
            <person name="Vogel J.H."/>
            <person name="Eyre T."/>
            <person name="Redmond S."/>
            <person name="Banerjee R."/>
            <person name="Chi J."/>
            <person name="Fu B."/>
            <person name="Langley E."/>
            <person name="Maguire S.F."/>
            <person name="Laird G.K."/>
            <person name="Lloyd D."/>
            <person name="Kenyon E."/>
            <person name="Donaldson S."/>
            <person name="Sehra H."/>
            <person name="Almeida-King J."/>
            <person name="Loveland J."/>
            <person name="Trevanion S."/>
            <person name="Jones M."/>
            <person name="Quail M."/>
            <person name="Willey D."/>
            <person name="Hunt A."/>
            <person name="Burton J."/>
            <person name="Sims S."/>
            <person name="McLay K."/>
            <person name="Plumb B."/>
            <person name="Davis J."/>
            <person name="Clee C."/>
            <person name="Oliver K."/>
            <person name="Clark R."/>
            <person name="Riddle C."/>
            <person name="Elliot D."/>
            <person name="Threadgold G."/>
            <person name="Harden G."/>
            <person name="Ware D."/>
            <person name="Begum S."/>
            <person name="Mortimore B."/>
            <person name="Kerry G."/>
            <person name="Heath P."/>
            <person name="Phillimore B."/>
            <person name="Tracey A."/>
            <person name="Corby N."/>
            <person name="Dunn M."/>
            <person name="Johnson C."/>
            <person name="Wood J."/>
            <person name="Clark S."/>
            <person name="Pelan S."/>
            <person name="Griffiths G."/>
            <person name="Smith M."/>
            <person name="Glithero R."/>
            <person name="Howden P."/>
            <person name="Barker N."/>
            <person name="Lloyd C."/>
            <person name="Stevens C."/>
            <person name="Harley J."/>
            <person name="Holt K."/>
            <person name="Panagiotidis G."/>
            <person name="Lovell J."/>
            <person name="Beasley H."/>
            <person name="Henderson C."/>
            <person name="Gordon D."/>
            <person name="Auger K."/>
            <person name="Wright D."/>
            <person name="Collins J."/>
            <person name="Raisen C."/>
            <person name="Dyer L."/>
            <person name="Leung K."/>
            <person name="Robertson L."/>
            <person name="Ambridge K."/>
            <person name="Leongamornlert D."/>
            <person name="McGuire S."/>
            <person name="Gilderthorp R."/>
            <person name="Griffiths C."/>
            <person name="Manthravadi D."/>
            <person name="Nichol S."/>
            <person name="Barker G."/>
            <person name="Whitehead S."/>
            <person name="Kay M."/>
            <person name="Brown J."/>
            <person name="Murnane C."/>
            <person name="Gray E."/>
            <person name="Humphries M."/>
            <person name="Sycamore N."/>
            <person name="Barker D."/>
            <person name="Saunders D."/>
            <person name="Wallis J."/>
            <person name="Babbage A."/>
            <person name="Hammond S."/>
            <person name="Mashreghi-Mohammadi M."/>
            <person name="Barr L."/>
            <person name="Martin S."/>
            <person name="Wray P."/>
            <person name="Ellington A."/>
            <person name="Matthews N."/>
            <person name="Ellwood M."/>
            <person name="Woodmansey R."/>
            <person name="Clark G."/>
            <person name="Cooper J."/>
            <person name="Tromans A."/>
            <person name="Grafham D."/>
            <person name="Skuce C."/>
            <person name="Pandian R."/>
            <person name="Andrews R."/>
            <person name="Harrison E."/>
            <person name="Kimberley A."/>
            <person name="Garnett J."/>
            <person name="Fosker N."/>
            <person name="Hall R."/>
            <person name="Garner P."/>
            <person name="Kelly D."/>
            <person name="Bird C."/>
            <person name="Palmer S."/>
            <person name="Gehring I."/>
            <person name="Berger A."/>
            <person name="Dooley C.M."/>
            <person name="Ersan-Urun Z."/>
            <person name="Eser C."/>
            <person name="Geiger H."/>
            <person name="Geisler M."/>
            <person name="Karotki L."/>
            <person name="Kirn A."/>
            <person name="Konantz J."/>
            <person name="Konantz M."/>
            <person name="Oberlander M."/>
            <person name="Rudolph-Geiger S."/>
            <person name="Teucke M."/>
            <person name="Lanz C."/>
            <person name="Raddatz G."/>
            <person name="Osoegawa K."/>
            <person name="Zhu B."/>
            <person name="Rapp A."/>
            <person name="Widaa S."/>
            <person name="Langford C."/>
            <person name="Yang F."/>
            <person name="Schuster S.C."/>
            <person name="Carter N.P."/>
            <person name="Harrow J."/>
            <person name="Ning Z."/>
            <person name="Herrero J."/>
            <person name="Searle S.M."/>
            <person name="Enright A."/>
            <person name="Geisler R."/>
            <person name="Plasterk R.H."/>
            <person name="Lee C."/>
            <person name="Westerfield M."/>
            <person name="de Jong P.J."/>
            <person name="Zon L.I."/>
            <person name="Postlethwait J.H."/>
            <person name="Nusslein-Volhard C."/>
            <person name="Hubbard T.J."/>
            <person name="Roest Crollius H."/>
            <person name="Rogers J."/>
            <person name="Stemple D.L."/>
        </authorList>
    </citation>
    <scope>NUCLEOTIDE SEQUENCE [LARGE SCALE GENOMIC DNA]</scope>
    <source>
        <strain>Tuebingen</strain>
    </source>
</reference>
<reference key="3">
    <citation type="submission" date="2003-12" db="EMBL/GenBank/DDBJ databases">
        <authorList>
            <consortium name="NIH - Zebrafish Gene Collection (ZGC) project"/>
        </authorList>
    </citation>
    <scope>NUCLEOTIDE SEQUENCE [LARGE SCALE MRNA]</scope>
</reference>
<reference evidence="9" key="4">
    <citation type="journal article" date="2023" name="Nature">
        <title>A molecular network of conserved factors keeps ribosomes dormant in the egg.</title>
        <authorList>
            <person name="Leesch F."/>
            <person name="Lorenzo-Orts L."/>
            <person name="Pribitzer C."/>
            <person name="Grishkovskaya I."/>
            <person name="Roehsner J."/>
            <person name="Chugunova A."/>
            <person name="Matzinger M."/>
            <person name="Roitinger E."/>
            <person name="Belacic K."/>
            <person name="Kandolf S."/>
            <person name="Lin T.Y."/>
            <person name="Mechtler K."/>
            <person name="Meinhart A."/>
            <person name="Haselbach D."/>
            <person name="Pauli A."/>
        </authorList>
    </citation>
    <scope>STRUCTURE BY ELECTRON MICROSCOPY (3.20 ANGSTROMS) IN COMPLEX WITH RIBOSOME AND HABP4</scope>
    <scope>INTERACTION WITH HABP4</scope>
</reference>
<name>EF2_DANRE</name>